<keyword id="KW-0997">Cell inner membrane</keyword>
<keyword id="KW-1003">Cell membrane</keyword>
<keyword id="KW-0472">Membrane</keyword>
<keyword id="KW-0812">Transmembrane</keyword>
<keyword id="KW-1133">Transmembrane helix</keyword>
<sequence>MMPLSRSRLEFIATILQNVLNLGLLTLGLILVVFLGKETVHLADALFVPEQASKYELVEGLVIYFLYFEFIALIVKYFKSGLHFPLRYFVYIGITAIVRLIIVDHKTPMDVLLYPAAILLLVITLWLCNSNRLRRE</sequence>
<organism>
    <name type="scientific">Salmonella gallinarum (strain 287/91 / NCTC 13346)</name>
    <dbReference type="NCBI Taxonomy" id="550538"/>
    <lineage>
        <taxon>Bacteria</taxon>
        <taxon>Pseudomonadati</taxon>
        <taxon>Pseudomonadota</taxon>
        <taxon>Gammaproteobacteria</taxon>
        <taxon>Enterobacterales</taxon>
        <taxon>Enterobacteriaceae</taxon>
        <taxon>Salmonella</taxon>
    </lineage>
</organism>
<dbReference type="EMBL" id="AM933173">
    <property type="protein sequence ID" value="CAR39838.1"/>
    <property type="molecule type" value="Genomic_DNA"/>
</dbReference>
<dbReference type="RefSeq" id="WP_000982751.1">
    <property type="nucleotide sequence ID" value="NC_011274.1"/>
</dbReference>
<dbReference type="SMR" id="B5R7S5"/>
<dbReference type="KEGG" id="seg:SG4068"/>
<dbReference type="HOGENOM" id="CLU_127561_0_1_6"/>
<dbReference type="Proteomes" id="UP000008321">
    <property type="component" value="Chromosome"/>
</dbReference>
<dbReference type="GO" id="GO:0005886">
    <property type="term" value="C:plasma membrane"/>
    <property type="evidence" value="ECO:0007669"/>
    <property type="project" value="UniProtKB-SubCell"/>
</dbReference>
<dbReference type="GO" id="GO:0016036">
    <property type="term" value="P:cellular response to phosphate starvation"/>
    <property type="evidence" value="ECO:0007669"/>
    <property type="project" value="InterPro"/>
</dbReference>
<dbReference type="HAMAP" id="MF_01048">
    <property type="entry name" value="PsiE"/>
    <property type="match status" value="1"/>
</dbReference>
<dbReference type="InterPro" id="IPR009315">
    <property type="entry name" value="P_starv_induced_PsiE"/>
</dbReference>
<dbReference type="InterPro" id="IPR020948">
    <property type="entry name" value="P_starv_induced_PsiE-like"/>
</dbReference>
<dbReference type="NCBIfam" id="NF002765">
    <property type="entry name" value="PRK02833.1-3"/>
    <property type="match status" value="1"/>
</dbReference>
<dbReference type="NCBIfam" id="NF002767">
    <property type="entry name" value="PRK02833.1-5"/>
    <property type="match status" value="1"/>
</dbReference>
<dbReference type="PANTHER" id="PTHR37819">
    <property type="entry name" value="PROTEIN PSIE"/>
    <property type="match status" value="1"/>
</dbReference>
<dbReference type="PANTHER" id="PTHR37819:SF1">
    <property type="entry name" value="PROTEIN PSIE"/>
    <property type="match status" value="1"/>
</dbReference>
<dbReference type="Pfam" id="PF06146">
    <property type="entry name" value="PsiE"/>
    <property type="match status" value="1"/>
</dbReference>
<dbReference type="PIRSF" id="PIRSF029598">
    <property type="entry name" value="PsiE"/>
    <property type="match status" value="1"/>
</dbReference>
<comment type="subcellular location">
    <subcellularLocation>
        <location evidence="1">Cell inner membrane</location>
        <topology evidence="1">Multi-pass membrane protein</topology>
    </subcellularLocation>
</comment>
<comment type="similarity">
    <text evidence="1">Belongs to the PsiE family.</text>
</comment>
<feature type="chain" id="PRO_1000136220" description="Protein PsiE">
    <location>
        <begin position="1"/>
        <end position="136"/>
    </location>
</feature>
<feature type="transmembrane region" description="Helical" evidence="1">
    <location>
        <begin position="15"/>
        <end position="35"/>
    </location>
</feature>
<feature type="transmembrane region" description="Helical" evidence="1">
    <location>
        <begin position="55"/>
        <end position="75"/>
    </location>
</feature>
<feature type="transmembrane region" description="Helical" evidence="1">
    <location>
        <begin position="83"/>
        <end position="103"/>
    </location>
</feature>
<feature type="transmembrane region" description="Helical" evidence="1">
    <location>
        <begin position="108"/>
        <end position="128"/>
    </location>
</feature>
<evidence type="ECO:0000255" key="1">
    <source>
        <dbReference type="HAMAP-Rule" id="MF_01048"/>
    </source>
</evidence>
<accession>B5R7S5</accession>
<name>PSIE_SALG2</name>
<reference key="1">
    <citation type="journal article" date="2008" name="Genome Res.">
        <title>Comparative genome analysis of Salmonella enteritidis PT4 and Salmonella gallinarum 287/91 provides insights into evolutionary and host adaptation pathways.</title>
        <authorList>
            <person name="Thomson N.R."/>
            <person name="Clayton D.J."/>
            <person name="Windhorst D."/>
            <person name="Vernikos G."/>
            <person name="Davidson S."/>
            <person name="Churcher C."/>
            <person name="Quail M.A."/>
            <person name="Stevens M."/>
            <person name="Jones M.A."/>
            <person name="Watson M."/>
            <person name="Barron A."/>
            <person name="Layton A."/>
            <person name="Pickard D."/>
            <person name="Kingsley R.A."/>
            <person name="Bignell A."/>
            <person name="Clark L."/>
            <person name="Harris B."/>
            <person name="Ormond D."/>
            <person name="Abdellah Z."/>
            <person name="Brooks K."/>
            <person name="Cherevach I."/>
            <person name="Chillingworth T."/>
            <person name="Woodward J."/>
            <person name="Norberczak H."/>
            <person name="Lord A."/>
            <person name="Arrowsmith C."/>
            <person name="Jagels K."/>
            <person name="Moule S."/>
            <person name="Mungall K."/>
            <person name="Saunders M."/>
            <person name="Whitehead S."/>
            <person name="Chabalgoity J.A."/>
            <person name="Maskell D."/>
            <person name="Humphreys T."/>
            <person name="Roberts M."/>
            <person name="Barrow P.A."/>
            <person name="Dougan G."/>
            <person name="Parkhill J."/>
        </authorList>
    </citation>
    <scope>NUCLEOTIDE SEQUENCE [LARGE SCALE GENOMIC DNA]</scope>
    <source>
        <strain>287/91 / NCTC 13346</strain>
    </source>
</reference>
<protein>
    <recommendedName>
        <fullName evidence="1">Protein PsiE</fullName>
    </recommendedName>
</protein>
<gene>
    <name evidence="1" type="primary">psiE</name>
    <name type="ordered locus">SG4068</name>
</gene>
<proteinExistence type="inferred from homology"/>